<feature type="chain" id="PRO_1000213846" description="D-amino acid dehydrogenase">
    <location>
        <begin position="1"/>
        <end position="432"/>
    </location>
</feature>
<feature type="binding site" evidence="1">
    <location>
        <begin position="3"/>
        <end position="17"/>
    </location>
    <ligand>
        <name>FAD</name>
        <dbReference type="ChEBI" id="CHEBI:57692"/>
    </ligand>
</feature>
<comment type="function">
    <text evidence="1">Oxidative deamination of D-amino acids.</text>
</comment>
<comment type="catalytic activity">
    <reaction evidence="1">
        <text>a D-alpha-amino acid + A + H2O = a 2-oxocarboxylate + AH2 + NH4(+)</text>
        <dbReference type="Rhea" id="RHEA:18125"/>
        <dbReference type="ChEBI" id="CHEBI:13193"/>
        <dbReference type="ChEBI" id="CHEBI:15377"/>
        <dbReference type="ChEBI" id="CHEBI:17499"/>
        <dbReference type="ChEBI" id="CHEBI:28938"/>
        <dbReference type="ChEBI" id="CHEBI:35179"/>
        <dbReference type="ChEBI" id="CHEBI:59871"/>
    </reaction>
</comment>
<comment type="cofactor">
    <cofactor evidence="1">
        <name>FAD</name>
        <dbReference type="ChEBI" id="CHEBI:57692"/>
    </cofactor>
</comment>
<comment type="pathway">
    <text>Amino-acid degradation; D-alanine degradation; NH(3) and pyruvate from D-alanine: step 1/1.</text>
</comment>
<comment type="similarity">
    <text evidence="1">Belongs to the DadA oxidoreductase family.</text>
</comment>
<organism>
    <name type="scientific">Escherichia coli (strain K12 / MC4100 / BW2952)</name>
    <dbReference type="NCBI Taxonomy" id="595496"/>
    <lineage>
        <taxon>Bacteria</taxon>
        <taxon>Pseudomonadati</taxon>
        <taxon>Pseudomonadota</taxon>
        <taxon>Gammaproteobacteria</taxon>
        <taxon>Enterobacterales</taxon>
        <taxon>Enterobacteriaceae</taxon>
        <taxon>Escherichia</taxon>
    </lineage>
</organism>
<accession>C4ZTN0</accession>
<reference key="1">
    <citation type="journal article" date="2009" name="J. Bacteriol.">
        <title>Genomic sequencing reveals regulatory mutations and recombinational events in the widely used MC4100 lineage of Escherichia coli K-12.</title>
        <authorList>
            <person name="Ferenci T."/>
            <person name="Zhou Z."/>
            <person name="Betteridge T."/>
            <person name="Ren Y."/>
            <person name="Liu Y."/>
            <person name="Feng L."/>
            <person name="Reeves P.R."/>
            <person name="Wang L."/>
        </authorList>
    </citation>
    <scope>NUCLEOTIDE SEQUENCE [LARGE SCALE GENOMIC DNA]</scope>
    <source>
        <strain>K12 / MC4100 / BW2952</strain>
    </source>
</reference>
<dbReference type="EC" id="1.4.99.-" evidence="1"/>
<dbReference type="EMBL" id="CP001396">
    <property type="protein sequence ID" value="ACR62735.1"/>
    <property type="molecule type" value="Genomic_DNA"/>
</dbReference>
<dbReference type="RefSeq" id="WP_001266908.1">
    <property type="nucleotide sequence ID" value="NC_012759.1"/>
</dbReference>
<dbReference type="SMR" id="C4ZTN0"/>
<dbReference type="GeneID" id="93776243"/>
<dbReference type="KEGG" id="ebw:BWG_1014"/>
<dbReference type="HOGENOM" id="CLU_007884_9_2_6"/>
<dbReference type="UniPathway" id="UPA00043">
    <property type="reaction ID" value="UER00498"/>
</dbReference>
<dbReference type="GO" id="GO:0005737">
    <property type="term" value="C:cytoplasm"/>
    <property type="evidence" value="ECO:0007669"/>
    <property type="project" value="TreeGrafter"/>
</dbReference>
<dbReference type="GO" id="GO:0005886">
    <property type="term" value="C:plasma membrane"/>
    <property type="evidence" value="ECO:0007669"/>
    <property type="project" value="TreeGrafter"/>
</dbReference>
<dbReference type="GO" id="GO:0008718">
    <property type="term" value="F:D-amino-acid dehydrogenase activity"/>
    <property type="evidence" value="ECO:0007669"/>
    <property type="project" value="UniProtKB-UniRule"/>
</dbReference>
<dbReference type="GO" id="GO:0055130">
    <property type="term" value="P:D-alanine catabolic process"/>
    <property type="evidence" value="ECO:0007669"/>
    <property type="project" value="UniProtKB-UniPathway"/>
</dbReference>
<dbReference type="FunFam" id="3.50.50.60:FF:000020">
    <property type="entry name" value="D-amino acid dehydrogenase"/>
    <property type="match status" value="1"/>
</dbReference>
<dbReference type="Gene3D" id="3.30.9.10">
    <property type="entry name" value="D-Amino Acid Oxidase, subunit A, domain 2"/>
    <property type="match status" value="1"/>
</dbReference>
<dbReference type="Gene3D" id="3.50.50.60">
    <property type="entry name" value="FAD/NAD(P)-binding domain"/>
    <property type="match status" value="2"/>
</dbReference>
<dbReference type="HAMAP" id="MF_01202">
    <property type="entry name" value="DadA"/>
    <property type="match status" value="1"/>
</dbReference>
<dbReference type="InterPro" id="IPR023080">
    <property type="entry name" value="DadA"/>
</dbReference>
<dbReference type="InterPro" id="IPR006076">
    <property type="entry name" value="FAD-dep_OxRdtase"/>
</dbReference>
<dbReference type="InterPro" id="IPR036188">
    <property type="entry name" value="FAD/NAD-bd_sf"/>
</dbReference>
<dbReference type="NCBIfam" id="NF001933">
    <property type="entry name" value="PRK00711.1"/>
    <property type="match status" value="1"/>
</dbReference>
<dbReference type="PANTHER" id="PTHR13847:SF280">
    <property type="entry name" value="D-AMINO ACID DEHYDROGENASE"/>
    <property type="match status" value="1"/>
</dbReference>
<dbReference type="PANTHER" id="PTHR13847">
    <property type="entry name" value="SARCOSINE DEHYDROGENASE-RELATED"/>
    <property type="match status" value="1"/>
</dbReference>
<dbReference type="Pfam" id="PF01266">
    <property type="entry name" value="DAO"/>
    <property type="match status" value="1"/>
</dbReference>
<dbReference type="SUPFAM" id="SSF54373">
    <property type="entry name" value="FAD-linked reductases, C-terminal domain"/>
    <property type="match status" value="1"/>
</dbReference>
<dbReference type="SUPFAM" id="SSF51905">
    <property type="entry name" value="FAD/NAD(P)-binding domain"/>
    <property type="match status" value="1"/>
</dbReference>
<name>DADA_ECOBW</name>
<sequence length="432" mass="47607">MRVVILGSGVVGVASAWYLNQAGHEVTVIDREPGAALETSAANAGQISPGYAAPWAAPGVPLKAIKWMFQRHAPLAVRLDGTQFQLKWMWQMLRNCDTSHYMENKGRMVRLAEYSRDCLKALRAETNIQYEGRQGGTLQLFRTEQQYENATRDIAVLEDAGVPYQLLESSRLAEVEPALAEVAHKLTGGLQLPNDETGDCQLFTQNLARMAEQAGVKFRFNTPVDQLLCDGEQIYGVKCGDEVIKADAYVMAFGSYSTAMLKGIVDIPVYPLKGYSLTIPIAQEDGAPVSTILDETYKIAITRFDNRIRVGGMAEIVGFNTELLQPRRETLEMVVRDLYPRGGHVEQATFWTGLRPMTPDGTPVVGRTRFKNLWLNTGHGTLGWTMACGSGQLLSDLLSGRTPAIPYEDLSVARYSRGFTPSRPGHLHGAHS</sequence>
<keyword id="KW-0274">FAD</keyword>
<keyword id="KW-0285">Flavoprotein</keyword>
<keyword id="KW-0560">Oxidoreductase</keyword>
<protein>
    <recommendedName>
        <fullName evidence="1">D-amino acid dehydrogenase</fullName>
        <ecNumber evidence="1">1.4.99.-</ecNumber>
    </recommendedName>
</protein>
<evidence type="ECO:0000255" key="1">
    <source>
        <dbReference type="HAMAP-Rule" id="MF_01202"/>
    </source>
</evidence>
<proteinExistence type="inferred from homology"/>
<gene>
    <name evidence="1" type="primary">dadA</name>
    <name type="ordered locus">BWG_1014</name>
</gene>